<organism>
    <name type="scientific">Xenopus laevis</name>
    <name type="common">African clawed frog</name>
    <dbReference type="NCBI Taxonomy" id="8355"/>
    <lineage>
        <taxon>Eukaryota</taxon>
        <taxon>Metazoa</taxon>
        <taxon>Chordata</taxon>
        <taxon>Craniata</taxon>
        <taxon>Vertebrata</taxon>
        <taxon>Euteleostomi</taxon>
        <taxon>Amphibia</taxon>
        <taxon>Batrachia</taxon>
        <taxon>Anura</taxon>
        <taxon>Pipoidea</taxon>
        <taxon>Pipidae</taxon>
        <taxon>Xenopodinae</taxon>
        <taxon>Xenopus</taxon>
        <taxon>Xenopus</taxon>
    </lineage>
</organism>
<name>SAM5B_XENLA</name>
<reference key="1">
    <citation type="submission" date="2003-10" db="EMBL/GenBank/DDBJ databases">
        <authorList>
            <consortium name="NIH - Xenopus Gene Collection (XGC) project"/>
        </authorList>
    </citation>
    <scope>NUCLEOTIDE SEQUENCE [LARGE SCALE MRNA]</scope>
    <source>
        <tissue>Kidney</tissue>
    </source>
</reference>
<accession>Q6PA35</accession>
<proteinExistence type="evidence at transcript level"/>
<comment type="function">
    <text evidence="2">May play a role in the maintenance of the structure of mitochondrial cristae.</text>
</comment>
<comment type="subunit">
    <text evidence="2">Associates with the mitochondrial contact site and cristae organizing system (MICOS) complex (also known as MINOS or MitOS complex).</text>
</comment>
<comment type="subcellular location">
    <subcellularLocation>
        <location evidence="2">Mitochondrion outer membrane</location>
        <topology evidence="1">Multi-pass membrane protein</topology>
    </subcellularLocation>
</comment>
<comment type="domain">
    <text evidence="1">Its C-terminal part seems to contain many membrane-spanning sided beta-sheets, that have the potential to adopt a transmembrane beta-barrel type structure.</text>
</comment>
<comment type="similarity">
    <text evidence="5">Belongs to the SAM50/omp85 family.</text>
</comment>
<gene>
    <name type="primary">samm50-b</name>
</gene>
<evidence type="ECO:0000250" key="1"/>
<evidence type="ECO:0000250" key="2">
    <source>
        <dbReference type="UniProtKB" id="Q9Y512"/>
    </source>
</evidence>
<evidence type="ECO:0000255" key="3">
    <source>
        <dbReference type="PROSITE-ProRule" id="PRU01115"/>
    </source>
</evidence>
<evidence type="ECO:0000256" key="4">
    <source>
        <dbReference type="SAM" id="MobiDB-lite"/>
    </source>
</evidence>
<evidence type="ECO:0000305" key="5"/>
<sequence>MGTVHARSLDPLPMNGPDFGSPDDADLVEVEPEKKQEILENKDVVVQRVHFEGLGRTKDDLIAHEIGQVFKAKNLIEVMRKSHEAREKLLRLGVFRNVEVLIDTSEGEDAVPNGLDVTFEVTELRRLTGSYNTMVGNNEGSMVLGLKFPNLFGRAEKMTFQFSYGTKETSYGLSFFKPQVGNFERNFSVNLYKVTGQFPWSSLRETDRGVSAEINFPIWKTSHTLKWEGVWRELGCLARTASFAIREESGHTLKSSLSHTMVIDSRNASILPKRGALLKINQELAGYTGGDVSFLKEDFELQLNKQLAWDSVLSTSLWGGMLVPVGDRPSSIADRFYLGGPTSVRGFSMYSIGPQSEGDYLGGEAYWAGGVHLYTPLPFRPGRGGFGDLFRTHFFLNAGNLCNLNYGEGPRAHLQRLAECIRWSYGAGLVLRLGNIARLELNYCIPMGVQSGDRICDGVQFGAGIRFL</sequence>
<dbReference type="EMBL" id="BC060470">
    <property type="protein sequence ID" value="AAH60470.1"/>
    <property type="molecule type" value="mRNA"/>
</dbReference>
<dbReference type="SMR" id="Q6PA35"/>
<dbReference type="DNASU" id="398869"/>
<dbReference type="GeneID" id="398869"/>
<dbReference type="KEGG" id="xla:398869"/>
<dbReference type="AGR" id="Xenbase:XB-GENE-6255146"/>
<dbReference type="CTD" id="398869"/>
<dbReference type="Xenbase" id="XB-GENE-6255146">
    <property type="gene designation" value="samm50.S"/>
</dbReference>
<dbReference type="OrthoDB" id="1724197at2759"/>
<dbReference type="Proteomes" id="UP000186698">
    <property type="component" value="Chromosome 3S"/>
</dbReference>
<dbReference type="Bgee" id="398869">
    <property type="expression patterns" value="Expressed in muscle tissue and 20 other cell types or tissues"/>
</dbReference>
<dbReference type="GO" id="GO:0005741">
    <property type="term" value="C:mitochondrial outer membrane"/>
    <property type="evidence" value="ECO:0007669"/>
    <property type="project" value="UniProtKB-SubCell"/>
</dbReference>
<dbReference type="GO" id="GO:0042407">
    <property type="term" value="P:cristae formation"/>
    <property type="evidence" value="ECO:0000250"/>
    <property type="project" value="UniProtKB"/>
</dbReference>
<dbReference type="GO" id="GO:0033108">
    <property type="term" value="P:mitochondrial respiratory chain complex assembly"/>
    <property type="evidence" value="ECO:0000318"/>
    <property type="project" value="GO_Central"/>
</dbReference>
<dbReference type="GO" id="GO:0045040">
    <property type="term" value="P:protein insertion into mitochondrial outer membrane"/>
    <property type="evidence" value="ECO:0000318"/>
    <property type="project" value="GO_Central"/>
</dbReference>
<dbReference type="FunFam" id="2.40.160.50:FF:000002">
    <property type="entry name" value="sorting and assembly machinery component 50 homolog"/>
    <property type="match status" value="1"/>
</dbReference>
<dbReference type="FunFam" id="3.10.20.310:FF:000010">
    <property type="entry name" value="sorting and assembly machinery component 50 homolog"/>
    <property type="match status" value="1"/>
</dbReference>
<dbReference type="Gene3D" id="3.10.20.310">
    <property type="entry name" value="membrane protein fhac"/>
    <property type="match status" value="1"/>
</dbReference>
<dbReference type="Gene3D" id="2.40.160.50">
    <property type="entry name" value="membrane protein fhac: a member of the omp85/tpsb transporter family"/>
    <property type="match status" value="1"/>
</dbReference>
<dbReference type="InterPro" id="IPR000184">
    <property type="entry name" value="Bac_surfAg_D15"/>
</dbReference>
<dbReference type="InterPro" id="IPR039910">
    <property type="entry name" value="D15-like"/>
</dbReference>
<dbReference type="InterPro" id="IPR034746">
    <property type="entry name" value="POTRA"/>
</dbReference>
<dbReference type="PANTHER" id="PTHR12815:SF18">
    <property type="entry name" value="SORTING AND ASSEMBLY MACHINERY COMPONENT 50 HOMOLOG"/>
    <property type="match status" value="1"/>
</dbReference>
<dbReference type="PANTHER" id="PTHR12815">
    <property type="entry name" value="SORTING AND ASSEMBLY MACHINERY SAMM50 PROTEIN FAMILY MEMBER"/>
    <property type="match status" value="1"/>
</dbReference>
<dbReference type="Pfam" id="PF01103">
    <property type="entry name" value="Omp85"/>
    <property type="match status" value="1"/>
</dbReference>
<dbReference type="PROSITE" id="PS51779">
    <property type="entry name" value="POTRA"/>
    <property type="match status" value="1"/>
</dbReference>
<feature type="chain" id="PRO_0000383684" description="Sorting and assembly machinery component 50 homolog B">
    <location>
        <begin position="1"/>
        <end position="468"/>
    </location>
</feature>
<feature type="domain" description="POTRA" evidence="3">
    <location>
        <begin position="44"/>
        <end position="124"/>
    </location>
</feature>
<feature type="region of interest" description="Disordered" evidence="4">
    <location>
        <begin position="1"/>
        <end position="25"/>
    </location>
</feature>
<keyword id="KW-0472">Membrane</keyword>
<keyword id="KW-0496">Mitochondrion</keyword>
<keyword id="KW-1000">Mitochondrion outer membrane</keyword>
<keyword id="KW-1185">Reference proteome</keyword>
<keyword id="KW-0812">Transmembrane</keyword>
<keyword id="KW-1134">Transmembrane beta strand</keyword>
<protein>
    <recommendedName>
        <fullName>Sorting and assembly machinery component 50 homolog B</fullName>
    </recommendedName>
</protein>